<gene>
    <name type="ORF">PF10_0343</name>
    <name type="ORF">PF3D7_1035200</name>
</gene>
<keyword id="KW-0461">Malaria</keyword>
<keyword id="KW-1185">Reference proteome</keyword>
<keyword id="KW-0677">Repeat</keyword>
<keyword id="KW-0732">Signal</keyword>
<evidence type="ECO:0000250" key="1"/>
<evidence type="ECO:0000250" key="2">
    <source>
        <dbReference type="UniProtKB" id="P04927"/>
    </source>
</evidence>
<evidence type="ECO:0000256" key="3">
    <source>
        <dbReference type="SAM" id="MobiDB-lite"/>
    </source>
</evidence>
<evidence type="ECO:0000305" key="4"/>
<evidence type="ECO:0000305" key="5">
    <source>
    </source>
</evidence>
<feature type="signal peptide" evidence="1">
    <location>
        <begin position="1"/>
        <end position="23"/>
    </location>
</feature>
<feature type="chain" id="PRO_0000024626" description="S-antigen protein">
    <location>
        <begin position="24"/>
        <end position="585"/>
    </location>
</feature>
<feature type="repeat" description="1">
    <location>
        <begin position="102"/>
        <end position="109"/>
    </location>
</feature>
<feature type="repeat" description="2">
    <location>
        <begin position="110"/>
        <end position="117"/>
    </location>
</feature>
<feature type="repeat" description="3">
    <location>
        <begin position="118"/>
        <end position="125"/>
    </location>
</feature>
<feature type="repeat" description="4">
    <location>
        <begin position="126"/>
        <end position="133"/>
    </location>
</feature>
<feature type="repeat" description="5">
    <location>
        <begin position="134"/>
        <end position="141"/>
    </location>
</feature>
<feature type="repeat" description="6">
    <location>
        <begin position="142"/>
        <end position="149"/>
    </location>
</feature>
<feature type="repeat" description="7">
    <location>
        <begin position="150"/>
        <end position="157"/>
    </location>
</feature>
<feature type="repeat" description="8">
    <location>
        <begin position="158"/>
        <end position="165"/>
    </location>
</feature>
<feature type="repeat" description="9">
    <location>
        <begin position="166"/>
        <end position="173"/>
    </location>
</feature>
<feature type="repeat" description="10">
    <location>
        <begin position="174"/>
        <end position="181"/>
    </location>
</feature>
<feature type="repeat" description="11">
    <location>
        <begin position="182"/>
        <end position="189"/>
    </location>
</feature>
<feature type="repeat" description="12">
    <location>
        <begin position="190"/>
        <end position="197"/>
    </location>
</feature>
<feature type="repeat" description="13">
    <location>
        <begin position="198"/>
        <end position="205"/>
    </location>
</feature>
<feature type="repeat" description="14">
    <location>
        <begin position="206"/>
        <end position="213"/>
    </location>
</feature>
<feature type="repeat" description="15">
    <location>
        <begin position="214"/>
        <end position="221"/>
    </location>
</feature>
<feature type="repeat" description="16">
    <location>
        <begin position="222"/>
        <end position="229"/>
    </location>
</feature>
<feature type="repeat" description="17">
    <location>
        <begin position="230"/>
        <end position="237"/>
    </location>
</feature>
<feature type="repeat" description="18">
    <location>
        <begin position="238"/>
        <end position="245"/>
    </location>
</feature>
<feature type="repeat" description="19">
    <location>
        <begin position="246"/>
        <end position="253"/>
    </location>
</feature>
<feature type="repeat" description="20">
    <location>
        <begin position="254"/>
        <end position="261"/>
    </location>
</feature>
<feature type="repeat" description="21">
    <location>
        <begin position="262"/>
        <end position="269"/>
    </location>
</feature>
<feature type="repeat" description="22">
    <location>
        <begin position="270"/>
        <end position="277"/>
    </location>
</feature>
<feature type="repeat" description="23">
    <location>
        <begin position="278"/>
        <end position="285"/>
    </location>
</feature>
<feature type="repeat" description="24">
    <location>
        <begin position="286"/>
        <end position="293"/>
    </location>
</feature>
<feature type="repeat" description="25">
    <location>
        <begin position="294"/>
        <end position="301"/>
    </location>
</feature>
<feature type="repeat" description="26">
    <location>
        <begin position="302"/>
        <end position="309"/>
    </location>
</feature>
<feature type="repeat" description="27">
    <location>
        <begin position="310"/>
        <end position="317"/>
    </location>
</feature>
<feature type="repeat" description="28">
    <location>
        <begin position="318"/>
        <end position="325"/>
    </location>
</feature>
<feature type="repeat" description="29">
    <location>
        <begin position="326"/>
        <end position="333"/>
    </location>
</feature>
<feature type="repeat" description="30">
    <location>
        <begin position="334"/>
        <end position="341"/>
    </location>
</feature>
<feature type="repeat" description="31">
    <location>
        <begin position="342"/>
        <end position="349"/>
    </location>
</feature>
<feature type="repeat" description="32">
    <location>
        <begin position="350"/>
        <end position="357"/>
    </location>
</feature>
<feature type="repeat" description="33">
    <location>
        <begin position="358"/>
        <end position="365"/>
    </location>
</feature>
<feature type="repeat" description="34">
    <location>
        <begin position="366"/>
        <end position="373"/>
    </location>
</feature>
<feature type="repeat" description="35">
    <location>
        <begin position="374"/>
        <end position="381"/>
    </location>
</feature>
<feature type="repeat" description="36">
    <location>
        <begin position="382"/>
        <end position="389"/>
    </location>
</feature>
<feature type="repeat" description="37">
    <location>
        <begin position="390"/>
        <end position="397"/>
    </location>
</feature>
<feature type="repeat" description="38">
    <location>
        <begin position="398"/>
        <end position="405"/>
    </location>
</feature>
<feature type="repeat" description="39">
    <location>
        <begin position="406"/>
        <end position="413"/>
    </location>
</feature>
<feature type="repeat" description="40">
    <location>
        <begin position="414"/>
        <end position="421"/>
    </location>
</feature>
<feature type="repeat" description="41">
    <location>
        <begin position="422"/>
        <end position="429"/>
    </location>
</feature>
<feature type="repeat" description="42">
    <location>
        <begin position="430"/>
        <end position="437"/>
    </location>
</feature>
<feature type="repeat" description="43">
    <location>
        <begin position="438"/>
        <end position="445"/>
    </location>
</feature>
<feature type="repeat" description="44">
    <location>
        <begin position="446"/>
        <end position="453"/>
    </location>
</feature>
<feature type="repeat" description="45">
    <location>
        <begin position="454"/>
        <end position="461"/>
    </location>
</feature>
<feature type="repeat" description="46">
    <location>
        <begin position="462"/>
        <end position="469"/>
    </location>
</feature>
<feature type="repeat" description="47">
    <location>
        <begin position="470"/>
        <end position="477"/>
    </location>
</feature>
<feature type="repeat" description="48">
    <location>
        <begin position="478"/>
        <end position="485"/>
    </location>
</feature>
<feature type="repeat" description="49">
    <location>
        <begin position="486"/>
        <end position="493"/>
    </location>
</feature>
<feature type="repeat" description="50">
    <location>
        <begin position="494"/>
        <end position="501"/>
    </location>
</feature>
<feature type="repeat" description="51">
    <location>
        <begin position="502"/>
        <end position="509"/>
    </location>
</feature>
<feature type="repeat" description="52">
    <location>
        <begin position="510"/>
        <end position="517"/>
    </location>
</feature>
<feature type="repeat" description="53">
    <location>
        <begin position="518"/>
        <end position="525"/>
    </location>
</feature>
<feature type="repeat" description="54">
    <location>
        <begin position="526"/>
        <end position="533"/>
    </location>
</feature>
<feature type="repeat" description="55">
    <location>
        <begin position="534"/>
        <end position="541"/>
    </location>
</feature>
<feature type="repeat" description="56">
    <location>
        <begin position="542"/>
        <end position="549"/>
    </location>
</feature>
<feature type="region of interest" description="Disordered" evidence="3">
    <location>
        <begin position="51"/>
        <end position="585"/>
    </location>
</feature>
<feature type="region of interest" description="56 X 8 AA tandem repeats of E-D-[EK]-V-S-N-G-[RG]">
    <location>
        <begin position="102"/>
        <end position="549"/>
    </location>
</feature>
<feature type="compositionally biased region" description="Acidic residues" evidence="3">
    <location>
        <begin position="59"/>
        <end position="85"/>
    </location>
</feature>
<feature type="compositionally biased region" description="Basic and acidic residues" evidence="3">
    <location>
        <begin position="96"/>
        <end position="113"/>
    </location>
</feature>
<feature type="compositionally biased region" description="Acidic residues" evidence="3">
    <location>
        <begin position="117"/>
        <end position="129"/>
    </location>
</feature>
<feature type="compositionally biased region" description="Basic and acidic residues" evidence="3">
    <location>
        <begin position="194"/>
        <end position="209"/>
    </location>
</feature>
<feature type="compositionally biased region" description="Basic and acidic residues" evidence="3">
    <location>
        <begin position="218"/>
        <end position="233"/>
    </location>
</feature>
<feature type="compositionally biased region" description="Basic and acidic residues" evidence="3">
    <location>
        <begin position="274"/>
        <end position="297"/>
    </location>
</feature>
<feature type="compositionally biased region" description="Basic and acidic residues" evidence="3">
    <location>
        <begin position="322"/>
        <end position="337"/>
    </location>
</feature>
<feature type="compositionally biased region" description="Basic and acidic residues" evidence="3">
    <location>
        <begin position="362"/>
        <end position="393"/>
    </location>
</feature>
<feature type="compositionally biased region" description="Basic and acidic residues" evidence="3">
    <location>
        <begin position="402"/>
        <end position="417"/>
    </location>
</feature>
<feature type="compositionally biased region" description="Basic and acidic residues" evidence="3">
    <location>
        <begin position="442"/>
        <end position="465"/>
    </location>
</feature>
<feature type="compositionally biased region" description="Acidic residues" evidence="3">
    <location>
        <begin position="469"/>
        <end position="481"/>
    </location>
</feature>
<feature type="compositionally biased region" description="Basic and acidic residues" evidence="3">
    <location>
        <begin position="530"/>
        <end position="553"/>
    </location>
</feature>
<feature type="compositionally biased region" description="Basic and acidic residues" evidence="3">
    <location>
        <begin position="560"/>
        <end position="569"/>
    </location>
</feature>
<feature type="compositionally biased region" description="Low complexity" evidence="3">
    <location>
        <begin position="576"/>
        <end position="585"/>
    </location>
</feature>
<feature type="sequence conflict" description="In Ref. 1; AAA29761." evidence="4" ref="1">
    <original>S</original>
    <variation>T</variation>
    <location>
        <position position="101"/>
    </location>
</feature>
<feature type="sequence conflict" description="In Ref. 1; AAA29761." evidence="4" ref="1">
    <original>K</original>
    <variation>E</variation>
    <location>
        <position position="200"/>
    </location>
</feature>
<feature type="sequence conflict" description="In Ref. 1; AAA29761." evidence="4" ref="1">
    <original>K</original>
    <variation>E</variation>
    <location>
        <position position="224"/>
    </location>
</feature>
<feature type="sequence conflict" description="In Ref. 1; AAA29761." evidence="4" ref="1">
    <original>K</original>
    <variation>E</variation>
    <location>
        <position position="280"/>
    </location>
</feature>
<feature type="sequence conflict" description="In Ref. 1; AAA29761." evidence="4" ref="1">
    <original>K</original>
    <variation>E</variation>
    <location>
        <position position="328"/>
    </location>
</feature>
<feature type="sequence conflict" description="In Ref. 1; AAA29761." evidence="4" ref="1">
    <original>K</original>
    <variation>E</variation>
    <location>
        <position position="368"/>
    </location>
</feature>
<feature type="sequence conflict" description="In Ref. 1; AAA29761." evidence="4" ref="1">
    <original>K</original>
    <variation>E</variation>
    <location>
        <position position="376"/>
    </location>
</feature>
<feature type="sequence conflict" description="In Ref. 1; AAA29761." evidence="4" ref="1">
    <original>K</original>
    <variation>E</variation>
    <location>
        <position position="408"/>
    </location>
</feature>
<feature type="sequence conflict" description="In Ref. 1; AAA29761." evidence="4" ref="1">
    <original>K</original>
    <variation>E</variation>
    <location>
        <position position="448"/>
    </location>
</feature>
<feature type="sequence conflict" description="In Ref. 1; AAA29761." evidence="4" ref="1">
    <original>K</original>
    <variation>E</variation>
    <location>
        <position position="456"/>
    </location>
</feature>
<feature type="sequence conflict" description="In Ref. 1; AAA29761." evidence="4" ref="1">
    <original>K</original>
    <variation>E</variation>
    <location>
        <position position="536"/>
    </location>
</feature>
<feature type="sequence conflict" description="In Ref. 1; AAA29761." evidence="4" ref="1">
    <original>D</original>
    <variation>DEVSNGRED</variation>
    <location>
        <position position="551"/>
    </location>
</feature>
<name>SANT_PLAF7</name>
<comment type="function">
    <text evidence="4">S antigens are soluble heat-stable proteins present in the sera of some infected individuals.</text>
</comment>
<comment type="subcellular location">
    <subcellularLocation>
        <location evidence="2">Parasitophorous vacuole</location>
    </subcellularLocation>
    <text evidence="2">Localizes to the cell periphery in early schizonts and then to the parasitophorous vacuole in late schizonts. Following schizont rupture, the S-antigen is released in host sera.</text>
</comment>
<comment type="polymorphism">
    <text evidence="5">Diversity in S-antigen is mainly due to polymorphism in the repetitive regions.</text>
</comment>
<sequence length="585" mass="62947">MNRILSVTLCLFFIYLYIYKTYGKVKNTDEGLSNIYGAKYYLRSGLFNEKNGKGQKYEDLEEEKEGENDDEEDSNSEESNNDEENELIKGQEGVEQETHGSEDEVSNGREDKVSNGGEDEVSNGGEDEVSNGREDKVSNGGEDEVSNGREDKVSNGGEDEVSNGREDKVSNGGEDEVSNGREDKVSNGGEDEVSNGREDKVSNGREDKVSNGGEDEVSNGREDKVSNGREDKVSNGGEDEVSNGREDKVSNGGEDEVSNGREDKVSNGGEDEVSNGREDKVSNGREDEVSNGREDKVSNGGEDEVSNGREDKVSNGGEDEVSNGREDKVSNGREDKVSNGGEDEVSNGREDKVSNGGEDEVSNGREDKVSNGREDKVSNGREDEVSNGREDKVSNGGEDEVSNGREDKVSNGREDKVSNGGEDEVSNGREDKVSNGGEDEVSNGREDKVSNGREDKVSNGREDKVSNGGEDEVSNGGEDEVSNGREDKVSNGGEDEVSNGREDKVSNGGEDEVSNGREDKVSNGGEDEVSNGREDKVSNGREDEVSNGREDKGGAGTDGELSHNSESHTKNKKSKNSIINMLIGM</sequence>
<dbReference type="EMBL" id="M81799">
    <property type="protein sequence ID" value="AAA29761.1"/>
    <property type="molecule type" value="mRNA"/>
</dbReference>
<dbReference type="EMBL" id="LN999944">
    <property type="protein sequence ID" value="CZT98609.1"/>
    <property type="molecule type" value="Genomic_DNA"/>
</dbReference>
<dbReference type="PIR" id="A48459">
    <property type="entry name" value="A48459"/>
</dbReference>
<dbReference type="RefSeq" id="XP_001347627.1">
    <property type="nucleotide sequence ID" value="XM_001347591.1"/>
</dbReference>
<dbReference type="SMR" id="Q03400"/>
<dbReference type="STRING" id="36329.Q03400"/>
<dbReference type="PaxDb" id="5833-PF10_0343"/>
<dbReference type="EnsemblProtists" id="CZT98609">
    <property type="protein sequence ID" value="CZT98609"/>
    <property type="gene ID" value="PF3D7_1035200"/>
</dbReference>
<dbReference type="GeneID" id="810500"/>
<dbReference type="KEGG" id="pfa:PF3D7_1035200"/>
<dbReference type="VEuPathDB" id="PlasmoDB:PF3D7_1035200"/>
<dbReference type="HOGENOM" id="CLU_466535_0_0_1"/>
<dbReference type="OMA" id="TGGSCIG"/>
<dbReference type="OrthoDB" id="378939at2759"/>
<dbReference type="PhylomeDB" id="Q03400"/>
<dbReference type="Proteomes" id="UP000001450">
    <property type="component" value="Chromosome 10"/>
</dbReference>
<dbReference type="GO" id="GO:0020003">
    <property type="term" value="C:symbiont-containing vacuole"/>
    <property type="evidence" value="ECO:0000304"/>
    <property type="project" value="GeneDB"/>
</dbReference>
<dbReference type="InterPro" id="IPR053118">
    <property type="entry name" value="HPI-Adhesin/Ser-rich"/>
</dbReference>
<dbReference type="InterPro" id="IPR008825">
    <property type="entry name" value="S-antigen"/>
</dbReference>
<dbReference type="PANTHER" id="PTHR36144">
    <property type="entry name" value="S-ANTIGEN PROTEIN"/>
    <property type="match status" value="1"/>
</dbReference>
<dbReference type="PANTHER" id="PTHR36144:SF6">
    <property type="entry name" value="S-ANTIGEN PROTEIN"/>
    <property type="match status" value="1"/>
</dbReference>
<dbReference type="Pfam" id="PF05756">
    <property type="entry name" value="S-antigen"/>
    <property type="match status" value="1"/>
</dbReference>
<accession>Q03400</accession>
<accession>A0A143ZZC7</accession>
<accession>Q8IJ57</accession>
<organism>
    <name type="scientific">Plasmodium falciparum (isolate 3D7)</name>
    <dbReference type="NCBI Taxonomy" id="36329"/>
    <lineage>
        <taxon>Eukaryota</taxon>
        <taxon>Sar</taxon>
        <taxon>Alveolata</taxon>
        <taxon>Apicomplexa</taxon>
        <taxon>Aconoidasida</taxon>
        <taxon>Haemosporida</taxon>
        <taxon>Plasmodiidae</taxon>
        <taxon>Plasmodium</taxon>
        <taxon>Plasmodium (Laverania)</taxon>
    </lineage>
</organism>
<proteinExistence type="evidence at transcript level"/>
<protein>
    <recommendedName>
        <fullName>S-antigen protein</fullName>
    </recommendedName>
</protein>
<reference key="1">
    <citation type="journal article" date="1992" name="Mol. Biochem. Parasitol.">
        <title>A fourth family of the Plasmodium falciparum S-antigen.</title>
        <authorList>
            <person name="Bickle Q.D."/>
            <person name="Coppel R."/>
        </authorList>
    </citation>
    <scope>NUCLEOTIDE SEQUENCE [MRNA]</scope>
</reference>
<reference key="2">
    <citation type="journal article" date="2002" name="Nature">
        <title>Genome sequence of the human malaria parasite Plasmodium falciparum.</title>
        <authorList>
            <person name="Gardner M.J."/>
            <person name="Hall N."/>
            <person name="Fung E."/>
            <person name="White O."/>
            <person name="Berriman M."/>
            <person name="Hyman R.W."/>
            <person name="Carlton J.M."/>
            <person name="Pain A."/>
            <person name="Nelson K.E."/>
            <person name="Bowman S."/>
            <person name="Paulsen I.T."/>
            <person name="James K.D."/>
            <person name="Eisen J.A."/>
            <person name="Rutherford K.M."/>
            <person name="Salzberg S.L."/>
            <person name="Craig A."/>
            <person name="Kyes S."/>
            <person name="Chan M.-S."/>
            <person name="Nene V."/>
            <person name="Shallom S.J."/>
            <person name="Suh B."/>
            <person name="Peterson J."/>
            <person name="Angiuoli S."/>
            <person name="Pertea M."/>
            <person name="Allen J."/>
            <person name="Selengut J."/>
            <person name="Haft D."/>
            <person name="Mather M.W."/>
            <person name="Vaidya A.B."/>
            <person name="Martin D.M.A."/>
            <person name="Fairlamb A.H."/>
            <person name="Fraunholz M.J."/>
            <person name="Roos D.S."/>
            <person name="Ralph S.A."/>
            <person name="McFadden G.I."/>
            <person name="Cummings L.M."/>
            <person name="Subramanian G.M."/>
            <person name="Mungall C."/>
            <person name="Venter J.C."/>
            <person name="Carucci D.J."/>
            <person name="Hoffman S.L."/>
            <person name="Newbold C."/>
            <person name="Davis R.W."/>
            <person name="Fraser C.M."/>
            <person name="Barrell B.G."/>
        </authorList>
    </citation>
    <scope>NUCLEOTIDE SEQUENCE [LARGE SCALE GENOMIC DNA]</scope>
    <source>
        <strain>3D7</strain>
    </source>
</reference>